<dbReference type="EMBL" id="AF166114">
    <property type="protein sequence ID" value="AAF43875.1"/>
    <property type="molecule type" value="Genomic_DNA"/>
</dbReference>
<dbReference type="RefSeq" id="NP_038437.1">
    <property type="nucleotide sequence ID" value="NC_002186.1"/>
</dbReference>
<dbReference type="SMR" id="Q9MUM3"/>
<dbReference type="GeneID" id="800995"/>
<dbReference type="GO" id="GO:0009535">
    <property type="term" value="C:chloroplast thylakoid membrane"/>
    <property type="evidence" value="ECO:0007669"/>
    <property type="project" value="UniProtKB-SubCell"/>
</dbReference>
<dbReference type="GO" id="GO:0005886">
    <property type="term" value="C:plasma membrane"/>
    <property type="evidence" value="ECO:0007669"/>
    <property type="project" value="TreeGrafter"/>
</dbReference>
<dbReference type="GO" id="GO:0020037">
    <property type="term" value="F:heme binding"/>
    <property type="evidence" value="ECO:0007669"/>
    <property type="project" value="InterPro"/>
</dbReference>
<dbReference type="GO" id="GO:0017004">
    <property type="term" value="P:cytochrome complex assembly"/>
    <property type="evidence" value="ECO:0007669"/>
    <property type="project" value="UniProtKB-UniRule"/>
</dbReference>
<dbReference type="HAMAP" id="MF_01391">
    <property type="entry name" value="CytC_CcsA"/>
    <property type="match status" value="1"/>
</dbReference>
<dbReference type="InterPro" id="IPR002541">
    <property type="entry name" value="Cyt_c_assembly"/>
</dbReference>
<dbReference type="InterPro" id="IPR017562">
    <property type="entry name" value="Cyt_c_biogenesis_CcsA"/>
</dbReference>
<dbReference type="InterPro" id="IPR045062">
    <property type="entry name" value="Cyt_c_biogenesis_CcsA/CcmC"/>
</dbReference>
<dbReference type="NCBIfam" id="TIGR03144">
    <property type="entry name" value="cytochr_II_ccsB"/>
    <property type="match status" value="1"/>
</dbReference>
<dbReference type="PANTHER" id="PTHR30071:SF1">
    <property type="entry name" value="CYTOCHROME B_B6 PROTEIN-RELATED"/>
    <property type="match status" value="1"/>
</dbReference>
<dbReference type="PANTHER" id="PTHR30071">
    <property type="entry name" value="HEME EXPORTER PROTEIN C"/>
    <property type="match status" value="1"/>
</dbReference>
<dbReference type="Pfam" id="PF01578">
    <property type="entry name" value="Cytochrom_C_asm"/>
    <property type="match status" value="1"/>
</dbReference>
<proteinExistence type="inferred from homology"/>
<organism>
    <name type="scientific">Mesostigma viride</name>
    <name type="common">Green alga</name>
    <dbReference type="NCBI Taxonomy" id="41882"/>
    <lineage>
        <taxon>Eukaryota</taxon>
        <taxon>Viridiplantae</taxon>
        <taxon>Streptophyta</taxon>
        <taxon>Mesostigmatophyceae</taxon>
        <taxon>Mesostigmatales</taxon>
        <taxon>Mesostigmataceae</taxon>
        <taxon>Mesostigma</taxon>
    </lineage>
</organism>
<reference key="1">
    <citation type="journal article" date="2000" name="Nature">
        <title>Ancestral chloroplast genome in Mesostigma viride reveals an early branch of green plant evolution.</title>
        <authorList>
            <person name="Lemieux C."/>
            <person name="Otis C."/>
            <person name="Turmel M."/>
        </authorList>
    </citation>
    <scope>NUCLEOTIDE SEQUENCE [LARGE SCALE GENOMIC DNA]</scope>
    <source>
        <strain>NIES-296 / KY-14 / CCMP 2046</strain>
    </source>
</reference>
<sequence length="305" mass="34891">MNLIEIETYLANASFALLLITMLIYGMKAIFTKNNILQLFGTLGILFSNFLVALLLSIRWFDSHHFPLSNMYESLMFLCWCFTFFHLLIEKYIQINFIGFITVPIAMLVNAFATFFLPLDMQHSTPLVPALKSNWLIMHVTIMMASYAALILGSLLSIAFLFLTYNKQIELQGNSIGNINDEMNSYITIDIEFQKNESIELAKLIDNLSYRTIGIGFPLLTIGIISGAVWANDAWGSYWSWDPKETWALITWIIFAIYLHTRITKGWQGRRPAIVAFIGFVIVWVCYLGVNLLGQGLHSYGWFTK</sequence>
<evidence type="ECO:0000255" key="1">
    <source>
        <dbReference type="HAMAP-Rule" id="MF_01391"/>
    </source>
</evidence>
<comment type="function">
    <text evidence="1">Required during biogenesis of c-type cytochromes (cytochrome c6 and cytochrome f) at the step of heme attachment.</text>
</comment>
<comment type="subunit">
    <text evidence="1">May interact with Ccs1.</text>
</comment>
<comment type="subcellular location">
    <subcellularLocation>
        <location evidence="1">Plastid</location>
        <location evidence="1">Chloroplast thylakoid membrane</location>
        <topology evidence="1">Multi-pass membrane protein</topology>
    </subcellularLocation>
</comment>
<comment type="similarity">
    <text evidence="1">Belongs to the CcmF/CycK/Ccl1/NrfE/CcsA family.</text>
</comment>
<accession>Q9MUM3</accession>
<keyword id="KW-0150">Chloroplast</keyword>
<keyword id="KW-0201">Cytochrome c-type biogenesis</keyword>
<keyword id="KW-0472">Membrane</keyword>
<keyword id="KW-0934">Plastid</keyword>
<keyword id="KW-0793">Thylakoid</keyword>
<keyword id="KW-0812">Transmembrane</keyword>
<keyword id="KW-1133">Transmembrane helix</keyword>
<geneLocation type="chloroplast"/>
<feature type="chain" id="PRO_0000201608" description="Cytochrome c biogenesis protein CcsA">
    <location>
        <begin position="1"/>
        <end position="305"/>
    </location>
</feature>
<feature type="transmembrane region" description="Helical" evidence="1">
    <location>
        <begin position="11"/>
        <end position="31"/>
    </location>
</feature>
<feature type="transmembrane region" description="Helical" evidence="1">
    <location>
        <begin position="36"/>
        <end position="56"/>
    </location>
</feature>
<feature type="transmembrane region" description="Helical" evidence="1">
    <location>
        <begin position="75"/>
        <end position="95"/>
    </location>
</feature>
<feature type="transmembrane region" description="Helical" evidence="1">
    <location>
        <begin position="97"/>
        <end position="117"/>
    </location>
</feature>
<feature type="transmembrane region" description="Helical" evidence="1">
    <location>
        <begin position="142"/>
        <end position="162"/>
    </location>
</feature>
<feature type="transmembrane region" description="Helical" evidence="1">
    <location>
        <begin position="212"/>
        <end position="232"/>
    </location>
</feature>
<feature type="transmembrane region" description="Helical" evidence="1">
    <location>
        <begin position="239"/>
        <end position="259"/>
    </location>
</feature>
<feature type="transmembrane region" description="Helical" evidence="1">
    <location>
        <begin position="273"/>
        <end position="293"/>
    </location>
</feature>
<gene>
    <name evidence="1" type="primary">ccsA</name>
</gene>
<name>CCSA_MESVI</name>
<protein>
    <recommendedName>
        <fullName evidence="1">Cytochrome c biogenesis protein CcsA</fullName>
    </recommendedName>
</protein>